<proteinExistence type="inferred from homology"/>
<sequence length="384" mass="41043">MFEPVELSNNAVIKVVGVGGGGGNAVEHMVRERIEGVEFFAINTDAQALRKVEVGQTIQIGNNITKGLGAGANPEIGRTSAEEDKELLKSALDGSDMVFIAAGMGGGTGTGAAPVVAEIAKELGILTVAVVTKPFNFEGKKRMMVADQGVLELSKHVDSLITIPNDKLLKVLSRGISLLDAFGAANNVLKGAVQGIAELITRPGLMNVDFADVRTVMVEMGYAMMGTGISSGENRAEEAAEIAISSPLLEDIDLSGARGVLVNITAGFDLKLDEFETVGNTIRSFASDNATVVIGTSLDPDMNDTLRVTVVATGIGMEKYSDVNQTKNKSSKEILMDYRYQYLNISPTAIDKKNVKNEIKETDNKKRKEPEYLDIPAFLRKRSD</sequence>
<organism>
    <name type="scientific">Buchnera aphidicola subsp. Schizaphis graminum (strain Sg)</name>
    <dbReference type="NCBI Taxonomy" id="198804"/>
    <lineage>
        <taxon>Bacteria</taxon>
        <taxon>Pseudomonadati</taxon>
        <taxon>Pseudomonadota</taxon>
        <taxon>Gammaproteobacteria</taxon>
        <taxon>Enterobacterales</taxon>
        <taxon>Erwiniaceae</taxon>
        <taxon>Buchnera</taxon>
    </lineage>
</organism>
<keyword id="KW-0131">Cell cycle</keyword>
<keyword id="KW-0132">Cell division</keyword>
<keyword id="KW-0963">Cytoplasm</keyword>
<keyword id="KW-0342">GTP-binding</keyword>
<keyword id="KW-0547">Nucleotide-binding</keyword>
<keyword id="KW-0717">Septation</keyword>
<gene>
    <name evidence="1" type="primary">ftsZ</name>
    <name type="ordered locus">BUsg_206</name>
</gene>
<dbReference type="EMBL" id="AF012886">
    <property type="protein sequence ID" value="AAC46069.1"/>
    <property type="molecule type" value="Genomic_DNA"/>
</dbReference>
<dbReference type="EMBL" id="AE013218">
    <property type="protein sequence ID" value="AAM67770.1"/>
    <property type="molecule type" value="Genomic_DNA"/>
</dbReference>
<dbReference type="RefSeq" id="WP_011053737.1">
    <property type="nucleotide sequence ID" value="NC_004061.1"/>
</dbReference>
<dbReference type="SMR" id="O51929"/>
<dbReference type="STRING" id="198804.BUsg_206"/>
<dbReference type="GeneID" id="93003673"/>
<dbReference type="KEGG" id="bas:BUsg_206"/>
<dbReference type="eggNOG" id="COG0206">
    <property type="taxonomic scope" value="Bacteria"/>
</dbReference>
<dbReference type="HOGENOM" id="CLU_024865_0_1_6"/>
<dbReference type="Proteomes" id="UP000000416">
    <property type="component" value="Chromosome"/>
</dbReference>
<dbReference type="GO" id="GO:0032153">
    <property type="term" value="C:cell division site"/>
    <property type="evidence" value="ECO:0007669"/>
    <property type="project" value="UniProtKB-UniRule"/>
</dbReference>
<dbReference type="GO" id="GO:0005737">
    <property type="term" value="C:cytoplasm"/>
    <property type="evidence" value="ECO:0007669"/>
    <property type="project" value="UniProtKB-SubCell"/>
</dbReference>
<dbReference type="GO" id="GO:0005525">
    <property type="term" value="F:GTP binding"/>
    <property type="evidence" value="ECO:0007669"/>
    <property type="project" value="UniProtKB-UniRule"/>
</dbReference>
<dbReference type="GO" id="GO:0003924">
    <property type="term" value="F:GTPase activity"/>
    <property type="evidence" value="ECO:0007669"/>
    <property type="project" value="UniProtKB-UniRule"/>
</dbReference>
<dbReference type="GO" id="GO:0000917">
    <property type="term" value="P:division septum assembly"/>
    <property type="evidence" value="ECO:0007669"/>
    <property type="project" value="UniProtKB-KW"/>
</dbReference>
<dbReference type="GO" id="GO:0043093">
    <property type="term" value="P:FtsZ-dependent cytokinesis"/>
    <property type="evidence" value="ECO:0007669"/>
    <property type="project" value="UniProtKB-UniRule"/>
</dbReference>
<dbReference type="GO" id="GO:0051258">
    <property type="term" value="P:protein polymerization"/>
    <property type="evidence" value="ECO:0007669"/>
    <property type="project" value="UniProtKB-UniRule"/>
</dbReference>
<dbReference type="CDD" id="cd02201">
    <property type="entry name" value="FtsZ_type1"/>
    <property type="match status" value="1"/>
</dbReference>
<dbReference type="FunFam" id="3.30.1330.20:FF:000004">
    <property type="entry name" value="Cell division protein FtsZ"/>
    <property type="match status" value="1"/>
</dbReference>
<dbReference type="FunFam" id="3.40.50.1440:FF:000023">
    <property type="entry name" value="Cell division protein FtsZ"/>
    <property type="match status" value="1"/>
</dbReference>
<dbReference type="Gene3D" id="3.30.1330.20">
    <property type="entry name" value="Tubulin/FtsZ, C-terminal domain"/>
    <property type="match status" value="1"/>
</dbReference>
<dbReference type="Gene3D" id="3.40.50.1440">
    <property type="entry name" value="Tubulin/FtsZ, GTPase domain"/>
    <property type="match status" value="1"/>
</dbReference>
<dbReference type="HAMAP" id="MF_00909">
    <property type="entry name" value="FtsZ"/>
    <property type="match status" value="1"/>
</dbReference>
<dbReference type="InterPro" id="IPR000158">
    <property type="entry name" value="Cell_div_FtsZ"/>
</dbReference>
<dbReference type="InterPro" id="IPR020805">
    <property type="entry name" value="Cell_div_FtsZ_CS"/>
</dbReference>
<dbReference type="InterPro" id="IPR045061">
    <property type="entry name" value="FtsZ/CetZ"/>
</dbReference>
<dbReference type="InterPro" id="IPR024757">
    <property type="entry name" value="FtsZ_C"/>
</dbReference>
<dbReference type="InterPro" id="IPR008280">
    <property type="entry name" value="Tub_FtsZ_C"/>
</dbReference>
<dbReference type="InterPro" id="IPR037103">
    <property type="entry name" value="Tubulin/FtsZ-like_C"/>
</dbReference>
<dbReference type="InterPro" id="IPR018316">
    <property type="entry name" value="Tubulin/FtsZ_2-layer-sand-dom"/>
</dbReference>
<dbReference type="InterPro" id="IPR036525">
    <property type="entry name" value="Tubulin/FtsZ_GTPase_sf"/>
</dbReference>
<dbReference type="InterPro" id="IPR003008">
    <property type="entry name" value="Tubulin_FtsZ_GTPase"/>
</dbReference>
<dbReference type="NCBIfam" id="TIGR00065">
    <property type="entry name" value="ftsZ"/>
    <property type="match status" value="1"/>
</dbReference>
<dbReference type="PANTHER" id="PTHR30314">
    <property type="entry name" value="CELL DIVISION PROTEIN FTSZ-RELATED"/>
    <property type="match status" value="1"/>
</dbReference>
<dbReference type="PANTHER" id="PTHR30314:SF3">
    <property type="entry name" value="MITOCHONDRIAL DIVISION PROTEIN FSZA"/>
    <property type="match status" value="1"/>
</dbReference>
<dbReference type="Pfam" id="PF12327">
    <property type="entry name" value="FtsZ_C"/>
    <property type="match status" value="1"/>
</dbReference>
<dbReference type="Pfam" id="PF00091">
    <property type="entry name" value="Tubulin"/>
    <property type="match status" value="1"/>
</dbReference>
<dbReference type="PRINTS" id="PR00423">
    <property type="entry name" value="CELLDVISFTSZ"/>
</dbReference>
<dbReference type="SMART" id="SM00864">
    <property type="entry name" value="Tubulin"/>
    <property type="match status" value="1"/>
</dbReference>
<dbReference type="SMART" id="SM00865">
    <property type="entry name" value="Tubulin_C"/>
    <property type="match status" value="1"/>
</dbReference>
<dbReference type="SUPFAM" id="SSF55307">
    <property type="entry name" value="Tubulin C-terminal domain-like"/>
    <property type="match status" value="1"/>
</dbReference>
<dbReference type="SUPFAM" id="SSF52490">
    <property type="entry name" value="Tubulin nucleotide-binding domain-like"/>
    <property type="match status" value="1"/>
</dbReference>
<dbReference type="PROSITE" id="PS01134">
    <property type="entry name" value="FTSZ_1"/>
    <property type="match status" value="1"/>
</dbReference>
<dbReference type="PROSITE" id="PS01135">
    <property type="entry name" value="FTSZ_2"/>
    <property type="match status" value="1"/>
</dbReference>
<evidence type="ECO:0000255" key="1">
    <source>
        <dbReference type="HAMAP-Rule" id="MF_00909"/>
    </source>
</evidence>
<evidence type="ECO:0000305" key="2"/>
<reference key="1">
    <citation type="journal article" date="1998" name="Curr. Microbiol.">
        <title>Characterization of ftsZ, the cell division gene of Buchnera aphidicola (endosymbiont of aphids) and detection of the product.</title>
        <authorList>
            <person name="Baumann L."/>
            <person name="Baumann P."/>
        </authorList>
    </citation>
    <scope>NUCLEOTIDE SEQUENCE [GENOMIC DNA]</scope>
</reference>
<reference key="2">
    <citation type="journal article" date="2002" name="Science">
        <title>50 million years of genomic stasis in endosymbiotic bacteria.</title>
        <authorList>
            <person name="Tamas I."/>
            <person name="Klasson L."/>
            <person name="Canbaeck B."/>
            <person name="Naeslund A.K."/>
            <person name="Eriksson A.-S."/>
            <person name="Wernegreen J.J."/>
            <person name="Sandstroem J.P."/>
            <person name="Moran N.A."/>
            <person name="Andersson S.G.E."/>
        </authorList>
    </citation>
    <scope>NUCLEOTIDE SEQUENCE [LARGE SCALE GENOMIC DNA]</scope>
    <source>
        <strain>Sg</strain>
    </source>
</reference>
<accession>O51929</accession>
<feature type="chain" id="PRO_0000114345" description="Cell division protein FtsZ">
    <location>
        <begin position="1"/>
        <end position="384"/>
    </location>
</feature>
<feature type="binding site" evidence="1">
    <location>
        <begin position="20"/>
        <end position="24"/>
    </location>
    <ligand>
        <name>GTP</name>
        <dbReference type="ChEBI" id="CHEBI:37565"/>
    </ligand>
</feature>
<feature type="binding site" evidence="1">
    <location>
        <begin position="107"/>
        <end position="109"/>
    </location>
    <ligand>
        <name>GTP</name>
        <dbReference type="ChEBI" id="CHEBI:37565"/>
    </ligand>
</feature>
<feature type="binding site" evidence="1">
    <location>
        <position position="138"/>
    </location>
    <ligand>
        <name>GTP</name>
        <dbReference type="ChEBI" id="CHEBI:37565"/>
    </ligand>
</feature>
<feature type="binding site" evidence="1">
    <location>
        <position position="142"/>
    </location>
    <ligand>
        <name>GTP</name>
        <dbReference type="ChEBI" id="CHEBI:37565"/>
    </ligand>
</feature>
<feature type="binding site" evidence="1">
    <location>
        <position position="186"/>
    </location>
    <ligand>
        <name>GTP</name>
        <dbReference type="ChEBI" id="CHEBI:37565"/>
    </ligand>
</feature>
<feature type="sequence conflict" description="In Ref. 1; AAC46069." evidence="2" ref="1">
    <original>R</original>
    <variation>V</variation>
    <location>
        <position position="78"/>
    </location>
</feature>
<feature type="sequence conflict" description="In Ref. 1; AAC46069." evidence="2" ref="1">
    <original>R</original>
    <variation>S</variation>
    <location>
        <position position="380"/>
    </location>
</feature>
<protein>
    <recommendedName>
        <fullName evidence="1">Cell division protein FtsZ</fullName>
    </recommendedName>
</protein>
<comment type="function">
    <text evidence="1">Essential cell division protein that forms a contractile ring structure (Z ring) at the future cell division site. The regulation of the ring assembly controls the timing and the location of cell division. One of the functions of the FtsZ ring is to recruit other cell division proteins to the septum to produce a new cell wall between the dividing cells. Binds GTP and shows GTPase activity.</text>
</comment>
<comment type="subunit">
    <text evidence="1">Homodimer. Polymerizes to form a dynamic ring structure in a strictly GTP-dependent manner. Interacts directly with several other division proteins.</text>
</comment>
<comment type="subcellular location">
    <subcellularLocation>
        <location evidence="1">Cytoplasm</location>
    </subcellularLocation>
    <text evidence="1">Assembles at midcell at the inner surface of the cytoplasmic membrane.</text>
</comment>
<comment type="similarity">
    <text evidence="1">Belongs to the FtsZ family.</text>
</comment>
<name>FTSZ_BUCAP</name>